<comment type="function">
    <text evidence="5 6">Negatively regulates Hedgehog (hh) protein signal in wing development (PubMed:18245841). Regulates neural-specific glycosylation by binding to FucTA mRNA and facilitating its nuclear export in neural cells (PubMed:21203496).</text>
</comment>
<comment type="subcellular location">
    <subcellularLocation>
        <location evidence="5">Nucleus</location>
    </subcellularLocation>
</comment>
<comment type="developmental stage">
    <text evidence="5">Expressed in precellular embryo along the ventral midline and, in germ-band retraction embryos, in segmental stripes. Expressed in third instar larvae in imaginal disks, salivary gland, optic lobe, fat body, wreath cells and gastric caecae of the gut.</text>
</comment>
<comment type="disruption phenotype">
    <text evidence="5 6">Recessive lethal (PubMed:18245841). Heteroallelic larvae are severely developmentally delayed and most have wing disks smaller than wild-type (PubMed:18245841). Heteroallelic adult flies show defects in wing hair orientation (PubMed:18245841). Defective alpha-1,3-fucosylation (PubMed:21203496). RNAi-mediated knockdown in the eye results in reduced FucTA protein levels (PubMed:21203496).</text>
</comment>
<reference evidence="9 10 11" key="1">
    <citation type="journal article" date="2008" name="Genetics">
        <title>A screen for modifiers of hedgehog signaling in Drosophila melanogaster identifies swm and mts.</title>
        <authorList>
            <person name="Casso D.J."/>
            <person name="Liu S."/>
            <person name="Iwaki D.D."/>
            <person name="Ogden S.K."/>
            <person name="Kornberg T.B."/>
        </authorList>
    </citation>
    <scope>NUCLEOTIDE SEQUENCE [GENOMIC DNA / MRNA]</scope>
    <scope>FUNCTION</scope>
    <scope>SUBCELLULAR LOCATION</scope>
    <scope>DEVELOPMENTAL STAGE</scope>
    <scope>DISRUPTION PHENOTYPE</scope>
    <scope>MUTAGENESIS OF ASP-921</scope>
</reference>
<reference evidence="13" key="2">
    <citation type="journal article" date="2000" name="Science">
        <title>The genome sequence of Drosophila melanogaster.</title>
        <authorList>
            <person name="Adams M.D."/>
            <person name="Celniker S.E."/>
            <person name="Holt R.A."/>
            <person name="Evans C.A."/>
            <person name="Gocayne J.D."/>
            <person name="Amanatides P.G."/>
            <person name="Scherer S.E."/>
            <person name="Li P.W."/>
            <person name="Hoskins R.A."/>
            <person name="Galle R.F."/>
            <person name="George R.A."/>
            <person name="Lewis S.E."/>
            <person name="Richards S."/>
            <person name="Ashburner M."/>
            <person name="Henderson S.N."/>
            <person name="Sutton G.G."/>
            <person name="Wortman J.R."/>
            <person name="Yandell M.D."/>
            <person name="Zhang Q."/>
            <person name="Chen L.X."/>
            <person name="Brandon R.C."/>
            <person name="Rogers Y.-H.C."/>
            <person name="Blazej R.G."/>
            <person name="Champe M."/>
            <person name="Pfeiffer B.D."/>
            <person name="Wan K.H."/>
            <person name="Doyle C."/>
            <person name="Baxter E.G."/>
            <person name="Helt G."/>
            <person name="Nelson C.R."/>
            <person name="Miklos G.L.G."/>
            <person name="Abril J.F."/>
            <person name="Agbayani A."/>
            <person name="An H.-J."/>
            <person name="Andrews-Pfannkoch C."/>
            <person name="Baldwin D."/>
            <person name="Ballew R.M."/>
            <person name="Basu A."/>
            <person name="Baxendale J."/>
            <person name="Bayraktaroglu L."/>
            <person name="Beasley E.M."/>
            <person name="Beeson K.Y."/>
            <person name="Benos P.V."/>
            <person name="Berman B.P."/>
            <person name="Bhandari D."/>
            <person name="Bolshakov S."/>
            <person name="Borkova D."/>
            <person name="Botchan M.R."/>
            <person name="Bouck J."/>
            <person name="Brokstein P."/>
            <person name="Brottier P."/>
            <person name="Burtis K.C."/>
            <person name="Busam D.A."/>
            <person name="Butler H."/>
            <person name="Cadieu E."/>
            <person name="Center A."/>
            <person name="Chandra I."/>
            <person name="Cherry J.M."/>
            <person name="Cawley S."/>
            <person name="Dahlke C."/>
            <person name="Davenport L.B."/>
            <person name="Davies P."/>
            <person name="de Pablos B."/>
            <person name="Delcher A."/>
            <person name="Deng Z."/>
            <person name="Mays A.D."/>
            <person name="Dew I."/>
            <person name="Dietz S.M."/>
            <person name="Dodson K."/>
            <person name="Doup L.E."/>
            <person name="Downes M."/>
            <person name="Dugan-Rocha S."/>
            <person name="Dunkov B.C."/>
            <person name="Dunn P."/>
            <person name="Durbin K.J."/>
            <person name="Evangelista C.C."/>
            <person name="Ferraz C."/>
            <person name="Ferriera S."/>
            <person name="Fleischmann W."/>
            <person name="Fosler C."/>
            <person name="Gabrielian A.E."/>
            <person name="Garg N.S."/>
            <person name="Gelbart W.M."/>
            <person name="Glasser K."/>
            <person name="Glodek A."/>
            <person name="Gong F."/>
            <person name="Gorrell J.H."/>
            <person name="Gu Z."/>
            <person name="Guan P."/>
            <person name="Harris M."/>
            <person name="Harris N.L."/>
            <person name="Harvey D.A."/>
            <person name="Heiman T.J."/>
            <person name="Hernandez J.R."/>
            <person name="Houck J."/>
            <person name="Hostin D."/>
            <person name="Houston K.A."/>
            <person name="Howland T.J."/>
            <person name="Wei M.-H."/>
            <person name="Ibegwam C."/>
            <person name="Jalali M."/>
            <person name="Kalush F."/>
            <person name="Karpen G.H."/>
            <person name="Ke Z."/>
            <person name="Kennison J.A."/>
            <person name="Ketchum K.A."/>
            <person name="Kimmel B.E."/>
            <person name="Kodira C.D."/>
            <person name="Kraft C.L."/>
            <person name="Kravitz S."/>
            <person name="Kulp D."/>
            <person name="Lai Z."/>
            <person name="Lasko P."/>
            <person name="Lei Y."/>
            <person name="Levitsky A.A."/>
            <person name="Li J.H."/>
            <person name="Li Z."/>
            <person name="Liang Y."/>
            <person name="Lin X."/>
            <person name="Liu X."/>
            <person name="Mattei B."/>
            <person name="McIntosh T.C."/>
            <person name="McLeod M.P."/>
            <person name="McPherson D."/>
            <person name="Merkulov G."/>
            <person name="Milshina N.V."/>
            <person name="Mobarry C."/>
            <person name="Morris J."/>
            <person name="Moshrefi A."/>
            <person name="Mount S.M."/>
            <person name="Moy M."/>
            <person name="Murphy B."/>
            <person name="Murphy L."/>
            <person name="Muzny D.M."/>
            <person name="Nelson D.L."/>
            <person name="Nelson D.R."/>
            <person name="Nelson K.A."/>
            <person name="Nixon K."/>
            <person name="Nusskern D.R."/>
            <person name="Pacleb J.M."/>
            <person name="Palazzolo M."/>
            <person name="Pittman G.S."/>
            <person name="Pan S."/>
            <person name="Pollard J."/>
            <person name="Puri V."/>
            <person name="Reese M.G."/>
            <person name="Reinert K."/>
            <person name="Remington K."/>
            <person name="Saunders R.D.C."/>
            <person name="Scheeler F."/>
            <person name="Shen H."/>
            <person name="Shue B.C."/>
            <person name="Siden-Kiamos I."/>
            <person name="Simpson M."/>
            <person name="Skupski M.P."/>
            <person name="Smith T.J."/>
            <person name="Spier E."/>
            <person name="Spradling A.C."/>
            <person name="Stapleton M."/>
            <person name="Strong R."/>
            <person name="Sun E."/>
            <person name="Svirskas R."/>
            <person name="Tector C."/>
            <person name="Turner R."/>
            <person name="Venter E."/>
            <person name="Wang A.H."/>
            <person name="Wang X."/>
            <person name="Wang Z.-Y."/>
            <person name="Wassarman D.A."/>
            <person name="Weinstock G.M."/>
            <person name="Weissenbach J."/>
            <person name="Williams S.M."/>
            <person name="Woodage T."/>
            <person name="Worley K.C."/>
            <person name="Wu D."/>
            <person name="Yang S."/>
            <person name="Yao Q.A."/>
            <person name="Ye J."/>
            <person name="Yeh R.-F."/>
            <person name="Zaveri J.S."/>
            <person name="Zhan M."/>
            <person name="Zhang G."/>
            <person name="Zhao Q."/>
            <person name="Zheng L."/>
            <person name="Zheng X.H."/>
            <person name="Zhong F.N."/>
            <person name="Zhong W."/>
            <person name="Zhou X."/>
            <person name="Zhu S.C."/>
            <person name="Zhu X."/>
            <person name="Smith H.O."/>
            <person name="Gibbs R.A."/>
            <person name="Myers E.W."/>
            <person name="Rubin G.M."/>
            <person name="Venter J.C."/>
        </authorList>
    </citation>
    <scope>NUCLEOTIDE SEQUENCE [LARGE SCALE GENOMIC DNA]</scope>
    <source>
        <strain evidence="13">Berkeley</strain>
    </source>
</reference>
<reference evidence="13" key="3">
    <citation type="journal article" date="2002" name="Genome Biol.">
        <title>Annotation of the Drosophila melanogaster euchromatic genome: a systematic review.</title>
        <authorList>
            <person name="Misra S."/>
            <person name="Crosby M.A."/>
            <person name="Mungall C.J."/>
            <person name="Matthews B.B."/>
            <person name="Campbell K.S."/>
            <person name="Hradecky P."/>
            <person name="Huang Y."/>
            <person name="Kaminker J.S."/>
            <person name="Millburn G.H."/>
            <person name="Prochnik S.E."/>
            <person name="Smith C.D."/>
            <person name="Tupy J.L."/>
            <person name="Whitfield E.J."/>
            <person name="Bayraktaroglu L."/>
            <person name="Berman B.P."/>
            <person name="Bettencourt B.R."/>
            <person name="Celniker S.E."/>
            <person name="de Grey A.D.N.J."/>
            <person name="Drysdale R.A."/>
            <person name="Harris N.L."/>
            <person name="Richter J."/>
            <person name="Russo S."/>
            <person name="Schroeder A.J."/>
            <person name="Shu S.Q."/>
            <person name="Stapleton M."/>
            <person name="Yamada C."/>
            <person name="Ashburner M."/>
            <person name="Gelbart W.M."/>
            <person name="Rubin G.M."/>
            <person name="Lewis S.E."/>
        </authorList>
    </citation>
    <scope>GENOME REANNOTATION</scope>
    <source>
        <strain evidence="13">Berkeley</strain>
    </source>
</reference>
<reference evidence="8" key="4">
    <citation type="journal article" date="2002" name="Genome Biol.">
        <title>A Drosophila full-length cDNA resource.</title>
        <authorList>
            <person name="Stapleton M."/>
            <person name="Carlson J.W."/>
            <person name="Brokstein P."/>
            <person name="Yu C."/>
            <person name="Champe M."/>
            <person name="George R.A."/>
            <person name="Guarin H."/>
            <person name="Kronmiller B."/>
            <person name="Pacleb J.M."/>
            <person name="Park S."/>
            <person name="Wan K.H."/>
            <person name="Rubin G.M."/>
            <person name="Celniker S.E."/>
        </authorList>
    </citation>
    <scope>NUCLEOTIDE SEQUENCE [LARGE SCALE MRNA]</scope>
    <source>
        <strain evidence="8">Berkeley</strain>
        <tissue evidence="8">Embryo</tissue>
    </source>
</reference>
<reference evidence="7" key="5">
    <citation type="journal article" date="2010" name="PLoS Genet.">
        <title>Identification of genes required for neural-specific glycosylation using functional genomics.</title>
        <authorList>
            <person name="Yamamoto-Hino M."/>
            <person name="Kanie Y."/>
            <person name="Awano W."/>
            <person name="Aoki-Kinoshita K.F."/>
            <person name="Yano H."/>
            <person name="Nishihara S."/>
            <person name="Okano H."/>
            <person name="Ueda R."/>
            <person name="Kanie O."/>
            <person name="Goto S."/>
        </authorList>
    </citation>
    <scope>FUNCTION</scope>
    <scope>DISRUPTION PHENOTYPE</scope>
</reference>
<gene>
    <name evidence="12" type="primary">swm</name>
    <name evidence="12" type="ORF">CG10084</name>
</gene>
<evidence type="ECO:0000255" key="1">
    <source>
        <dbReference type="PROSITE-ProRule" id="PRU00176"/>
    </source>
</evidence>
<evidence type="ECO:0000255" key="2">
    <source>
        <dbReference type="PROSITE-ProRule" id="PRU00627"/>
    </source>
</evidence>
<evidence type="ECO:0000255" key="3">
    <source>
        <dbReference type="PROSITE-ProRule" id="PRU00723"/>
    </source>
</evidence>
<evidence type="ECO:0000256" key="4">
    <source>
        <dbReference type="SAM" id="MobiDB-lite"/>
    </source>
</evidence>
<evidence type="ECO:0000269" key="5">
    <source>
    </source>
</evidence>
<evidence type="ECO:0000269" key="6">
    <source>
    </source>
</evidence>
<evidence type="ECO:0000305" key="7"/>
<evidence type="ECO:0000312" key="8">
    <source>
        <dbReference type="EMBL" id="AAM11384.1"/>
    </source>
</evidence>
<evidence type="ECO:0000312" key="9">
    <source>
        <dbReference type="EMBL" id="ABV58368.1"/>
    </source>
</evidence>
<evidence type="ECO:0000312" key="10">
    <source>
        <dbReference type="EMBL" id="ABV58369.1"/>
    </source>
</evidence>
<evidence type="ECO:0000312" key="11">
    <source>
        <dbReference type="EMBL" id="ABV58370.1"/>
    </source>
</evidence>
<evidence type="ECO:0000312" key="12">
    <source>
        <dbReference type="FlyBase" id="FBgn0002044"/>
    </source>
</evidence>
<evidence type="ECO:0000312" key="13">
    <source>
        <dbReference type="Proteomes" id="UP000000803"/>
    </source>
</evidence>
<keyword id="KW-0175">Coiled coil</keyword>
<keyword id="KW-0217">Developmental protein</keyword>
<keyword id="KW-0479">Metal-binding</keyword>
<keyword id="KW-0509">mRNA transport</keyword>
<keyword id="KW-0539">Nucleus</keyword>
<keyword id="KW-1185">Reference proteome</keyword>
<keyword id="KW-0694">RNA-binding</keyword>
<keyword id="KW-0813">Transport</keyword>
<keyword id="KW-0862">Zinc</keyword>
<keyword id="KW-0863">Zinc-finger</keyword>
<proteinExistence type="evidence at protein level"/>
<dbReference type="EMBL" id="EF601876">
    <property type="protein sequence ID" value="ABV58368.1"/>
    <property type="molecule type" value="mRNA"/>
</dbReference>
<dbReference type="EMBL" id="EF601877">
    <property type="protein sequence ID" value="ABV58369.1"/>
    <property type="molecule type" value="Genomic_DNA"/>
</dbReference>
<dbReference type="EMBL" id="EF601878">
    <property type="protein sequence ID" value="ABV58370.1"/>
    <property type="molecule type" value="Genomic_DNA"/>
</dbReference>
<dbReference type="EMBL" id="AE014134">
    <property type="protein sequence ID" value="AAF53812.1"/>
    <property type="molecule type" value="Genomic_DNA"/>
</dbReference>
<dbReference type="EMBL" id="AE014134">
    <property type="protein sequence ID" value="AAN11045.1"/>
    <property type="molecule type" value="Genomic_DNA"/>
</dbReference>
<dbReference type="EMBL" id="AY095056">
    <property type="protein sequence ID" value="AAM11384.1"/>
    <property type="molecule type" value="mRNA"/>
</dbReference>
<dbReference type="RefSeq" id="NP_609976.1">
    <property type="nucleotide sequence ID" value="NM_136132.5"/>
</dbReference>
<dbReference type="RefSeq" id="NP_724201.1">
    <property type="nucleotide sequence ID" value="NM_165304.2"/>
</dbReference>
<dbReference type="SMR" id="Q9VIV2"/>
<dbReference type="FunCoup" id="Q9VIV2">
    <property type="interactions" value="2881"/>
</dbReference>
<dbReference type="IntAct" id="Q9VIV2">
    <property type="interactions" value="5"/>
</dbReference>
<dbReference type="STRING" id="7227.FBpp0303743"/>
<dbReference type="GlyGen" id="Q9VIV2">
    <property type="glycosylation" value="2 sites"/>
</dbReference>
<dbReference type="PaxDb" id="7227-FBpp0303743"/>
<dbReference type="DNASU" id="35235"/>
<dbReference type="EnsemblMetazoa" id="FBtr0081244">
    <property type="protein sequence ID" value="FBpp0080785"/>
    <property type="gene ID" value="FBgn0002044"/>
</dbReference>
<dbReference type="EnsemblMetazoa" id="FBtr0081245">
    <property type="protein sequence ID" value="FBpp0080786"/>
    <property type="gene ID" value="FBgn0002044"/>
</dbReference>
<dbReference type="GeneID" id="35235"/>
<dbReference type="KEGG" id="dme:Dmel_CG10084"/>
<dbReference type="UCSC" id="CG10084-RA">
    <property type="organism name" value="d. melanogaster"/>
</dbReference>
<dbReference type="AGR" id="FB:FBgn0002044"/>
<dbReference type="CTD" id="35235"/>
<dbReference type="FlyBase" id="FBgn0002044">
    <property type="gene designation" value="swm"/>
</dbReference>
<dbReference type="VEuPathDB" id="VectorBase:FBgn0002044"/>
<dbReference type="eggNOG" id="KOG2135">
    <property type="taxonomic scope" value="Eukaryota"/>
</dbReference>
<dbReference type="GeneTree" id="ENSGT00510000046929"/>
<dbReference type="HOGENOM" id="CLU_006190_1_0_1"/>
<dbReference type="InParanoid" id="Q9VIV2"/>
<dbReference type="OrthoDB" id="443401at2759"/>
<dbReference type="PhylomeDB" id="Q9VIV2"/>
<dbReference type="BioGRID-ORCS" id="35235">
    <property type="hits" value="0 hits in 3 CRISPR screens"/>
</dbReference>
<dbReference type="ChiTaRS" id="swm">
    <property type="organism name" value="fly"/>
</dbReference>
<dbReference type="GenomeRNAi" id="35235"/>
<dbReference type="PRO" id="PR:Q9VIV2"/>
<dbReference type="Proteomes" id="UP000000803">
    <property type="component" value="Chromosome 2L"/>
</dbReference>
<dbReference type="Bgee" id="FBgn0002044">
    <property type="expression patterns" value="Expressed in cleaving embryo and 262 other cell types or tissues"/>
</dbReference>
<dbReference type="ExpressionAtlas" id="Q9VIV2">
    <property type="expression patterns" value="baseline and differential"/>
</dbReference>
<dbReference type="GO" id="GO:0005634">
    <property type="term" value="C:nucleus"/>
    <property type="evidence" value="ECO:0000314"/>
    <property type="project" value="FlyBase"/>
</dbReference>
<dbReference type="GO" id="GO:0003729">
    <property type="term" value="F:mRNA binding"/>
    <property type="evidence" value="ECO:0000314"/>
    <property type="project" value="FlyBase"/>
</dbReference>
<dbReference type="GO" id="GO:0003723">
    <property type="term" value="F:RNA binding"/>
    <property type="evidence" value="ECO:0000318"/>
    <property type="project" value="GO_Central"/>
</dbReference>
<dbReference type="GO" id="GO:0008270">
    <property type="term" value="F:zinc ion binding"/>
    <property type="evidence" value="ECO:0007669"/>
    <property type="project" value="UniProtKB-KW"/>
</dbReference>
<dbReference type="GO" id="GO:0051028">
    <property type="term" value="P:mRNA transport"/>
    <property type="evidence" value="ECO:0007669"/>
    <property type="project" value="UniProtKB-KW"/>
</dbReference>
<dbReference type="GO" id="GO:0010628">
    <property type="term" value="P:positive regulation of gene expression"/>
    <property type="evidence" value="ECO:0000315"/>
    <property type="project" value="FlyBase"/>
</dbReference>
<dbReference type="GO" id="GO:0046833">
    <property type="term" value="P:positive regulation of RNA export from nucleus"/>
    <property type="evidence" value="ECO:0000315"/>
    <property type="project" value="FlyBase"/>
</dbReference>
<dbReference type="CDD" id="cd12257">
    <property type="entry name" value="RRM1_RBM26_like"/>
    <property type="match status" value="1"/>
</dbReference>
<dbReference type="CDD" id="cd12258">
    <property type="entry name" value="RRM2_RBM26_like"/>
    <property type="match status" value="1"/>
</dbReference>
<dbReference type="FunFam" id="3.30.70.330:FF:000330">
    <property type="entry name" value="RNA-binding motif protein 26"/>
    <property type="match status" value="1"/>
</dbReference>
<dbReference type="FunFam" id="3.30.70.330:FF:000622">
    <property type="entry name" value="Uncharacterized protein, isoform B"/>
    <property type="match status" value="1"/>
</dbReference>
<dbReference type="Gene3D" id="3.30.70.330">
    <property type="match status" value="2"/>
</dbReference>
<dbReference type="Gene3D" id="1.20.1390.10">
    <property type="entry name" value="PWI domain"/>
    <property type="match status" value="1"/>
</dbReference>
<dbReference type="InterPro" id="IPR012677">
    <property type="entry name" value="Nucleotide-bd_a/b_plait_sf"/>
</dbReference>
<dbReference type="InterPro" id="IPR002483">
    <property type="entry name" value="PWI_dom"/>
</dbReference>
<dbReference type="InterPro" id="IPR035979">
    <property type="entry name" value="RBD_domain_sf"/>
</dbReference>
<dbReference type="InterPro" id="IPR039511">
    <property type="entry name" value="RBM26-like_RRM2"/>
</dbReference>
<dbReference type="InterPro" id="IPR045137">
    <property type="entry name" value="RBM26/27"/>
</dbReference>
<dbReference type="InterPro" id="IPR000571">
    <property type="entry name" value="Znf_CCCH"/>
</dbReference>
<dbReference type="PANTHER" id="PTHR14398">
    <property type="entry name" value="RNA RECOGNITION RRM/RNP DOMAIN"/>
    <property type="match status" value="1"/>
</dbReference>
<dbReference type="PANTHER" id="PTHR14398:SF0">
    <property type="entry name" value="ZINC FINGER PROTEIN SWM"/>
    <property type="match status" value="1"/>
</dbReference>
<dbReference type="Pfam" id="PF14605">
    <property type="entry name" value="Nup35_RRM_2"/>
    <property type="match status" value="1"/>
</dbReference>
<dbReference type="Pfam" id="PF01480">
    <property type="entry name" value="PWI"/>
    <property type="match status" value="1"/>
</dbReference>
<dbReference type="SUPFAM" id="SSF54928">
    <property type="entry name" value="RNA-binding domain, RBD"/>
    <property type="match status" value="2"/>
</dbReference>
<dbReference type="PROSITE" id="PS50103">
    <property type="entry name" value="ZF_C3H1"/>
    <property type="match status" value="1"/>
</dbReference>
<accession>Q9VIV2</accession>
<accession>B1NLF3</accession>
<accession>B1NLF4</accession>
<organism evidence="13">
    <name type="scientific">Drosophila melanogaster</name>
    <name type="common">Fruit fly</name>
    <dbReference type="NCBI Taxonomy" id="7227"/>
    <lineage>
        <taxon>Eukaryota</taxon>
        <taxon>Metazoa</taxon>
        <taxon>Ecdysozoa</taxon>
        <taxon>Arthropoda</taxon>
        <taxon>Hexapoda</taxon>
        <taxon>Insecta</taxon>
        <taxon>Pterygota</taxon>
        <taxon>Neoptera</taxon>
        <taxon>Endopterygota</taxon>
        <taxon>Diptera</taxon>
        <taxon>Brachycera</taxon>
        <taxon>Muscomorpha</taxon>
        <taxon>Ephydroidea</taxon>
        <taxon>Drosophilidae</taxon>
        <taxon>Drosophila</taxon>
        <taxon>Sophophora</taxon>
    </lineage>
</organism>
<protein>
    <recommendedName>
        <fullName evidence="7">Zinc finger protein swm</fullName>
    </recommendedName>
    <alternativeName>
        <fullName evidence="9">Protein second mitotic wave missing</fullName>
    </alternativeName>
</protein>
<sequence>MILENSDKLKDWLSVVLEPLCDADSSALARYVIALLKKDKSDKDLKRIMIEQLDVFLSEETTRFVERLFDAIASEEYLTVPAAPLITASSASTAELTVDQELALVIDGPQDDIEAVLVADSPPPPPKDNVIKPDSNQVKLEQASQDAREAEALAFISQEAGIAMHVPTDAKPAFDHKTKDSHNQQSASNYQHHHVRSASPPGRSSGVSGSGGGGPGGAGLAAGYADKENQPRDSRRRRASLRSRSRSRSRSNERAFRRSRSRDRRVNEREKTQRQFRNKSPPGSQTDNRHHGRRNFDRRRIGGNADDRPRFGNNKSRRSHSRSMSPERNARRNQNSPDRVQTAQANLIPAPVAPPAPVEHPASHPRQRCRDFDEKGYCVRGETCPWDHGVNPVVFEGINNTSLMMSMREYNPDAPEIWARSGGPPPGAGQGPVPPPTQPGQTTINPFSGNVRPTTLMSGSGPSPMGVPNPADYARNPGAPPQAAMMPFPFNPTAVTTPLQRQLIPIPVVDGAPTGGVAEVGKRRFELEDTVAIADVPTKRKVPINSRLGPRVNPNMQQHNSSLELRKVPRGLNTIAHLNNHFAKFGKIVNIQVSYEGDPEAAIVTFSTHAEANVAYRSTEAVLNNRFIKVFWHNDSSGADVGQMNQMGGGGGGGGRKNASQYHLHNVPAVPTPNADGAKISNANPLTEAGAGNIGTPATEQANTAAPASMRLKLNTTTAGGSAGGAAGAGAPGSGRPLNPAANAASIRKKQEEQQKAVHQLANGLRKRKQELLQSYMKQMKTALELVERMDQQDPQRAPTLQTIKVLQMTIDKLRKEIKADQDQLQAQMQQQQQQQQPPVKKTKEQQKKELLDMELELIAQQQEGNDTTAIQKRLEELQRNLGVGSAANNKSTHYAPASGAPGGGAGRKRPNLPEGPTRVDRRPKAIVVTGFAAEEADFVLGHFKNFGEISKHDVDREIPQLILSYATRLNAEQAVLRGKMYKDKRLQISWAPVVTPAPAPMAAPVEKSAAPGDMSVSLENPKQLIQSVSESESLLGSDTLPELRLEDEEEDEESEDRSWRR</sequence>
<name>SWM_DROME</name>
<feature type="chain" id="PRO_0000438659" description="Zinc finger protein swm" evidence="7">
    <location>
        <begin position="1"/>
        <end position="1062"/>
    </location>
</feature>
<feature type="domain" description="PWI" evidence="2">
    <location>
        <begin position="7"/>
        <end position="75"/>
    </location>
</feature>
<feature type="domain" description="RRM" evidence="1">
    <location>
        <begin position="561"/>
        <end position="635"/>
    </location>
</feature>
<feature type="zinc finger region" description="C3H1-type" evidence="3">
    <location>
        <begin position="363"/>
        <end position="391"/>
    </location>
</feature>
<feature type="region of interest" description="Disordered" evidence="4">
    <location>
        <begin position="119"/>
        <end position="145"/>
    </location>
</feature>
<feature type="region of interest" description="Disordered" evidence="4">
    <location>
        <begin position="171"/>
        <end position="340"/>
    </location>
</feature>
<feature type="region of interest" description="Disordered" evidence="4">
    <location>
        <begin position="416"/>
        <end position="463"/>
    </location>
</feature>
<feature type="region of interest" description="Disordered" evidence="4">
    <location>
        <begin position="666"/>
        <end position="704"/>
    </location>
</feature>
<feature type="region of interest" description="Disordered" evidence="4">
    <location>
        <begin position="716"/>
        <end position="741"/>
    </location>
</feature>
<feature type="region of interest" description="Disordered" evidence="4">
    <location>
        <begin position="822"/>
        <end position="847"/>
    </location>
</feature>
<feature type="region of interest" description="Disordered" evidence="4">
    <location>
        <begin position="886"/>
        <end position="920"/>
    </location>
</feature>
<feature type="region of interest" description="Disordered" evidence="4">
    <location>
        <begin position="1004"/>
        <end position="1062"/>
    </location>
</feature>
<feature type="compositionally biased region" description="Polar residues" evidence="4">
    <location>
        <begin position="134"/>
        <end position="145"/>
    </location>
</feature>
<feature type="compositionally biased region" description="Basic and acidic residues" evidence="4">
    <location>
        <begin position="172"/>
        <end position="182"/>
    </location>
</feature>
<feature type="compositionally biased region" description="Low complexity" evidence="4">
    <location>
        <begin position="197"/>
        <end position="207"/>
    </location>
</feature>
<feature type="compositionally biased region" description="Gly residues" evidence="4">
    <location>
        <begin position="208"/>
        <end position="220"/>
    </location>
</feature>
<feature type="compositionally biased region" description="Basic residues" evidence="4">
    <location>
        <begin position="234"/>
        <end position="249"/>
    </location>
</feature>
<feature type="compositionally biased region" description="Basic and acidic residues" evidence="4">
    <location>
        <begin position="264"/>
        <end position="273"/>
    </location>
</feature>
<feature type="compositionally biased region" description="Basic and acidic residues" evidence="4">
    <location>
        <begin position="294"/>
        <end position="310"/>
    </location>
</feature>
<feature type="compositionally biased region" description="Polar residues" evidence="4">
    <location>
        <begin position="322"/>
        <end position="340"/>
    </location>
</feature>
<feature type="compositionally biased region" description="Pro residues" evidence="4">
    <location>
        <begin position="423"/>
        <end position="438"/>
    </location>
</feature>
<feature type="compositionally biased region" description="Polar residues" evidence="4">
    <location>
        <begin position="444"/>
        <end position="461"/>
    </location>
</feature>
<feature type="compositionally biased region" description="Gly residues" evidence="4">
    <location>
        <begin position="721"/>
        <end position="733"/>
    </location>
</feature>
<feature type="compositionally biased region" description="Low complexity" evidence="4">
    <location>
        <begin position="823"/>
        <end position="840"/>
    </location>
</feature>
<feature type="compositionally biased region" description="Polar residues" evidence="4">
    <location>
        <begin position="1018"/>
        <end position="1037"/>
    </location>
</feature>
<feature type="compositionally biased region" description="Acidic residues" evidence="4">
    <location>
        <begin position="1046"/>
        <end position="1056"/>
    </location>
</feature>
<feature type="mutagenesis site" description="In swmF15; recessive lethal and induces reduced fucosylation levels." evidence="5 6">
    <original>D</original>
    <variation>N</variation>
    <location>
        <position position="921"/>
    </location>
</feature>
<feature type="sequence conflict" description="In Ref. 1; ABV58369/ABV58370." evidence="7" ref="1">
    <original>S</original>
    <variation>A</variation>
    <location>
        <position position="402"/>
    </location>
</feature>